<proteinExistence type="inferred from homology"/>
<sequence length="1521" mass="167339">MDVVNSTARAAVTSATAVTAVTGTGDRHPNPLSSAVAAASDVANAHGSSSWLGLFARVVLWLLQFVSMVLYYAIKLATISVPTLLYTLFSTSLTVTMNATTLMLIVAAMIGAISWVVRYRYLNMYSRLPPEPQRKEPDVDLFPDTHEEGIKSGLSNYFDEFLSAIKIFGYLERPVFHELTRSMQTRKLIAGESFNLEEEKGFCLVVDGLVEIFVKSSSYNRRYPHGPYFSPNSEAPSSDDEHPAPGQQRYQLLTEVRNGAPMSSLFSIMSLFTEDVPLRHADEDNSEPGTTTHSGLFPNYPASADFRKSRVRMDSVPNTPQMDASASSSANNLPGQLDRGLPHVPPISLDGTGFSKPQRPVPKRSNTTSAHPDIIARATVDTTVAIIPASAFRRLIKIYPKATAHIVHVILSRFQRVTLATAYNYLGLTNEVLQIERQMLKYTTQQLPNHLRGDALDRLKEKFKREVERMGEEDDVSKGIALHNARAGRRRRSTATLRKEAALQAFSKQRNISSMSGSSLAIPNAGDLVTHLQQSRGGGNRAQSVAFTDGPSPHLDVEREAVSPLAQRTFDPFVTPRSIHVALEKRETLDEDNLFRESILECMFRSIGLTGSGGSNKDADSNQASPRLISFDQRRQKALYTNHAFGFMDGLDGSADGDTESITSAGLSLPASPNPQFLAQEMRDEMEIVFFPKGSVLVEQGERNPGLYYVVDGFLDICTQEDAAASDVVHPTSRTSLHAMDSAQSIRSPQRSPQPFAESMRSGNKVDDAEIKSKPNRRSVALIKPGGLAGYVGTISSYRSFIEVVAKTDVYVGFLPLTSIERIVDRYPIVLLTMAKRLTNLLPRLILHIDFALEWLQVNAGQVIFHEGDESEAIYIVLNGRLRLVEDRKDGGMNVKAEYGQGESIGELEVLTETSRSGTLHAIRDTELVKFPRTLFNSLAQEHPNITIKISKIIASRMRALIDDPSTMLGIKDSSGRSSINKSSTTLNLRTVAVLPVSAGVPVVEFSNRLLSALTEVGAPNGATSLNSAAVLNHLGKHAFNRMGKLKLSQYLADLEEKYGLVIYVADTNVNAPWTQTCVAQADCVLMVGLADGSPEIGEYERFMLGMKSTARKILVLLHQERYSNSGLTRKWLKNRVWINGGHFHVQMTYSPNAVPIHPPAKPSGPTLRERVQILQAEIQKYTSRKVRHSPFYSPDAPFKGDFHRLARRLCGKSVGLVLGGGGARGIAQIGIIRAMQEAGIPIDIVGGTSIGAFIGALYARHADFVPIVNAAKKFSGRMASMWRFALDLTYPSASYTTGHEFNRGIFKAFGNTQIEDFWLDYYCNTTNISKSRAEFHTSGYAWWYVRASMSLAGLLLPLCDEGSMLLDGGYVDNLTVSHMKSLGSDVIFAVDVGALDDNTPQAFGDSLSGMWAFFNRWNPFSSVANPPTLAEIQARLAYVSSVDALERAKTLPGCIYMRPPIEEYGTLDFGKFMEIYGVGYKYGQEFLAKLRERGGVLPIGEEMGGKKGLRRTMAPRRASI</sequence>
<comment type="function">
    <text evidence="1">Intracellular phospholipase B that catalyzes the double deacylation of phosphatidylcholine (PC) to glycerophosphocholine (GroPCho). Plays an important role in membrane lipid homeostasis. Responsible for the rapid PC turnover in response to inositol, elevated temperatures, or when choline is present in the growth medium (By similarity).</text>
</comment>
<comment type="catalytic activity">
    <reaction>
        <text>a 1-acyl-sn-glycero-3-phosphocholine + H2O = sn-glycerol 3-phosphocholine + a fatty acid + H(+)</text>
        <dbReference type="Rhea" id="RHEA:15177"/>
        <dbReference type="ChEBI" id="CHEBI:15377"/>
        <dbReference type="ChEBI" id="CHEBI:15378"/>
        <dbReference type="ChEBI" id="CHEBI:16870"/>
        <dbReference type="ChEBI" id="CHEBI:28868"/>
        <dbReference type="ChEBI" id="CHEBI:58168"/>
        <dbReference type="EC" id="3.1.1.5"/>
    </reaction>
</comment>
<comment type="activity regulation">
    <text evidence="1">Inhibited by organophosphorus esters.</text>
</comment>
<comment type="subcellular location">
    <subcellularLocation>
        <location evidence="1">Endoplasmic reticulum membrane</location>
        <topology evidence="1">Multi-pass membrane protein</topology>
    </subcellularLocation>
</comment>
<comment type="similarity">
    <text evidence="5">Belongs to the NTE family.</text>
</comment>
<comment type="sequence caution" evidence="5">
    <conflict type="frameshift">
        <sequence resource="EMBL-CDS" id="EAQ88144"/>
    </conflict>
</comment>
<gene>
    <name type="primary">NTE1</name>
    <name type="ORF">CHGG_04763</name>
</gene>
<reference key="1">
    <citation type="journal article" date="2015" name="Genome Announc.">
        <title>Draft genome sequence of the cellulolytic fungus Chaetomium globosum.</title>
        <authorList>
            <person name="Cuomo C.A."/>
            <person name="Untereiner W.A."/>
            <person name="Ma L.-J."/>
            <person name="Grabherr M."/>
            <person name="Birren B.W."/>
        </authorList>
    </citation>
    <scope>NUCLEOTIDE SEQUENCE [LARGE SCALE GENOMIC DNA]</scope>
    <source>
        <strain>ATCC 6205 / CBS 148.51 / DSM 1962 / NBRC 6347 / NRRL 1970</strain>
    </source>
</reference>
<protein>
    <recommendedName>
        <fullName>Lysophospholipase NTE1</fullName>
        <ecNumber>3.1.1.5</ecNumber>
    </recommendedName>
    <alternativeName>
        <fullName>Intracellular phospholipase B</fullName>
    </alternativeName>
    <alternativeName>
        <fullName>Neuropathy target esterase homolog</fullName>
    </alternativeName>
</protein>
<name>NTE1_CHAGB</name>
<evidence type="ECO:0000250" key="1"/>
<evidence type="ECO:0000255" key="2"/>
<evidence type="ECO:0000255" key="3">
    <source>
        <dbReference type="PROSITE-ProRule" id="PRU01161"/>
    </source>
</evidence>
<evidence type="ECO:0000256" key="4">
    <source>
        <dbReference type="SAM" id="MobiDB-lite"/>
    </source>
</evidence>
<evidence type="ECO:0000305" key="5"/>
<feature type="chain" id="PRO_0000295316" description="Lysophospholipase NTE1">
    <location>
        <begin position="1"/>
        <end position="1521"/>
    </location>
</feature>
<feature type="topological domain" description="Cytoplasmic" evidence="1">
    <location>
        <begin position="1"/>
        <end position="50"/>
    </location>
</feature>
<feature type="transmembrane region" description="Helical" evidence="2">
    <location>
        <begin position="51"/>
        <end position="71"/>
    </location>
</feature>
<feature type="topological domain" description="Lumenal" evidence="1">
    <location>
        <begin position="72"/>
        <end position="96"/>
    </location>
</feature>
<feature type="transmembrane region" description="Helical" evidence="2">
    <location>
        <begin position="97"/>
        <end position="117"/>
    </location>
</feature>
<feature type="topological domain" description="Cytoplasmic" evidence="1">
    <location>
        <begin position="118"/>
        <end position="1521"/>
    </location>
</feature>
<feature type="domain" description="PNPLA" evidence="3">
    <location>
        <begin position="1217"/>
        <end position="1381"/>
    </location>
</feature>
<feature type="region of interest" description="Disordered" evidence="4">
    <location>
        <begin position="280"/>
        <end position="301"/>
    </location>
</feature>
<feature type="region of interest" description="Disordered" evidence="4">
    <location>
        <begin position="315"/>
        <end position="372"/>
    </location>
</feature>
<feature type="region of interest" description="Disordered" evidence="4">
    <location>
        <begin position="738"/>
        <end position="768"/>
    </location>
</feature>
<feature type="short sequence motif" description="GXGXXG" evidence="3">
    <location>
        <begin position="1221"/>
        <end position="1226"/>
    </location>
</feature>
<feature type="short sequence motif" description="GXSXG" evidence="3">
    <location>
        <begin position="1248"/>
        <end position="1252"/>
    </location>
</feature>
<feature type="short sequence motif" description="DGA/G" evidence="3">
    <location>
        <begin position="1368"/>
        <end position="1370"/>
    </location>
</feature>
<feature type="compositionally biased region" description="Polar residues" evidence="4">
    <location>
        <begin position="316"/>
        <end position="334"/>
    </location>
</feature>
<feature type="compositionally biased region" description="Polar residues" evidence="4">
    <location>
        <begin position="738"/>
        <end position="753"/>
    </location>
</feature>
<feature type="active site" description="Nucleophile" evidence="3">
    <location>
        <position position="1250"/>
    </location>
</feature>
<feature type="active site" description="Proton acceptor" evidence="3">
    <location>
        <position position="1368"/>
    </location>
</feature>
<feature type="binding site">
    <location>
        <begin position="670"/>
        <end position="789"/>
    </location>
    <ligand>
        <name>a nucleoside 3',5'-cyclic phosphate</name>
        <dbReference type="ChEBI" id="CHEBI:58464"/>
        <label>1</label>
    </ligand>
</feature>
<feature type="binding site">
    <location>
        <begin position="837"/>
        <end position="957"/>
    </location>
    <ligand>
        <name>a nucleoside 3',5'-cyclic phosphate</name>
        <dbReference type="ChEBI" id="CHEBI:58464"/>
        <label>2</label>
    </ligand>
</feature>
<accession>Q2H0D3</accession>
<dbReference type="EC" id="3.1.1.5"/>
<dbReference type="EMBL" id="CH408032">
    <property type="protein sequence ID" value="EAQ88144.1"/>
    <property type="status" value="ALT_FRAME"/>
    <property type="molecule type" value="Genomic_DNA"/>
</dbReference>
<dbReference type="RefSeq" id="XP_001223977.1">
    <property type="nucleotide sequence ID" value="XM_001223976.1"/>
</dbReference>
<dbReference type="SMR" id="Q2H0D3"/>
<dbReference type="FunCoup" id="Q2H0D3">
    <property type="interactions" value="97"/>
</dbReference>
<dbReference type="STRING" id="306901.Q2H0D3"/>
<dbReference type="GeneID" id="4392000"/>
<dbReference type="VEuPathDB" id="FungiDB:CHGG_04763"/>
<dbReference type="eggNOG" id="KOG2968">
    <property type="taxonomic scope" value="Eukaryota"/>
</dbReference>
<dbReference type="HOGENOM" id="CLU_000960_1_1_1"/>
<dbReference type="InParanoid" id="Q2H0D3"/>
<dbReference type="OrthoDB" id="421051at2759"/>
<dbReference type="Proteomes" id="UP000001056">
    <property type="component" value="Unassembled WGS sequence"/>
</dbReference>
<dbReference type="GO" id="GO:0005789">
    <property type="term" value="C:endoplasmic reticulum membrane"/>
    <property type="evidence" value="ECO:0007669"/>
    <property type="project" value="UniProtKB-SubCell"/>
</dbReference>
<dbReference type="GO" id="GO:0004622">
    <property type="term" value="F:lysophospholipase activity"/>
    <property type="evidence" value="ECO:0007669"/>
    <property type="project" value="UniProtKB-EC"/>
</dbReference>
<dbReference type="GO" id="GO:0046486">
    <property type="term" value="P:glycerolipid metabolic process"/>
    <property type="evidence" value="ECO:0007669"/>
    <property type="project" value="UniProtKB-ARBA"/>
</dbReference>
<dbReference type="GO" id="GO:0016042">
    <property type="term" value="P:lipid catabolic process"/>
    <property type="evidence" value="ECO:0007669"/>
    <property type="project" value="UniProtKB-KW"/>
</dbReference>
<dbReference type="CDD" id="cd00038">
    <property type="entry name" value="CAP_ED"/>
    <property type="match status" value="2"/>
</dbReference>
<dbReference type="FunFam" id="2.60.120.10:FF:000062">
    <property type="entry name" value="Lysophospholipase NTE1"/>
    <property type="match status" value="1"/>
</dbReference>
<dbReference type="FunFam" id="3.40.1090.10:FF:000007">
    <property type="entry name" value="Lysophospholipase NTE1"/>
    <property type="match status" value="1"/>
</dbReference>
<dbReference type="Gene3D" id="3.40.1090.10">
    <property type="entry name" value="Cytosolic phospholipase A2 catalytic domain"/>
    <property type="match status" value="2"/>
</dbReference>
<dbReference type="Gene3D" id="2.60.120.10">
    <property type="entry name" value="Jelly Rolls"/>
    <property type="match status" value="3"/>
</dbReference>
<dbReference type="InterPro" id="IPR016035">
    <property type="entry name" value="Acyl_Trfase/lysoPLipase"/>
</dbReference>
<dbReference type="InterPro" id="IPR000595">
    <property type="entry name" value="cNMP-bd_dom"/>
</dbReference>
<dbReference type="InterPro" id="IPR018490">
    <property type="entry name" value="cNMP-bd_dom_sf"/>
</dbReference>
<dbReference type="InterPro" id="IPR050301">
    <property type="entry name" value="NTE"/>
</dbReference>
<dbReference type="InterPro" id="IPR056556">
    <property type="entry name" value="NTE1_P-loop_dom"/>
</dbReference>
<dbReference type="InterPro" id="IPR002641">
    <property type="entry name" value="PNPLA_dom"/>
</dbReference>
<dbReference type="InterPro" id="IPR014710">
    <property type="entry name" value="RmlC-like_jellyroll"/>
</dbReference>
<dbReference type="PANTHER" id="PTHR14226:SF29">
    <property type="entry name" value="NEUROPATHY TARGET ESTERASE SWS"/>
    <property type="match status" value="1"/>
</dbReference>
<dbReference type="PANTHER" id="PTHR14226">
    <property type="entry name" value="NEUROPATHY TARGET ESTERASE/SWISS CHEESE D.MELANOGASTER"/>
    <property type="match status" value="1"/>
</dbReference>
<dbReference type="Pfam" id="PF00027">
    <property type="entry name" value="cNMP_binding"/>
    <property type="match status" value="1"/>
</dbReference>
<dbReference type="Pfam" id="PF24179">
    <property type="entry name" value="NTE_Ploop"/>
    <property type="match status" value="1"/>
</dbReference>
<dbReference type="Pfam" id="PF01734">
    <property type="entry name" value="Patatin"/>
    <property type="match status" value="1"/>
</dbReference>
<dbReference type="SMART" id="SM00100">
    <property type="entry name" value="cNMP"/>
    <property type="match status" value="2"/>
</dbReference>
<dbReference type="SUPFAM" id="SSF51206">
    <property type="entry name" value="cAMP-binding domain-like"/>
    <property type="match status" value="3"/>
</dbReference>
<dbReference type="SUPFAM" id="SSF52151">
    <property type="entry name" value="FabD/lysophospholipase-like"/>
    <property type="match status" value="1"/>
</dbReference>
<dbReference type="PROSITE" id="PS50042">
    <property type="entry name" value="CNMP_BINDING_3"/>
    <property type="match status" value="2"/>
</dbReference>
<dbReference type="PROSITE" id="PS51635">
    <property type="entry name" value="PNPLA"/>
    <property type="match status" value="1"/>
</dbReference>
<organism>
    <name type="scientific">Chaetomium globosum (strain ATCC 6205 / CBS 148.51 / DSM 1962 / NBRC 6347 / NRRL 1970)</name>
    <name type="common">Soil fungus</name>
    <dbReference type="NCBI Taxonomy" id="306901"/>
    <lineage>
        <taxon>Eukaryota</taxon>
        <taxon>Fungi</taxon>
        <taxon>Dikarya</taxon>
        <taxon>Ascomycota</taxon>
        <taxon>Pezizomycotina</taxon>
        <taxon>Sordariomycetes</taxon>
        <taxon>Sordariomycetidae</taxon>
        <taxon>Sordariales</taxon>
        <taxon>Chaetomiaceae</taxon>
        <taxon>Chaetomium</taxon>
    </lineage>
</organism>
<keyword id="KW-0256">Endoplasmic reticulum</keyword>
<keyword id="KW-0378">Hydrolase</keyword>
<keyword id="KW-0442">Lipid degradation</keyword>
<keyword id="KW-0443">Lipid metabolism</keyword>
<keyword id="KW-0472">Membrane</keyword>
<keyword id="KW-1185">Reference proteome</keyword>
<keyword id="KW-0677">Repeat</keyword>
<keyword id="KW-0812">Transmembrane</keyword>
<keyword id="KW-1133">Transmembrane helix</keyword>